<name>RL16_BACCZ</name>
<reference key="1">
    <citation type="journal article" date="2006" name="J. Bacteriol.">
        <title>Pathogenomic sequence analysis of Bacillus cereus and Bacillus thuringiensis isolates closely related to Bacillus anthracis.</title>
        <authorList>
            <person name="Han C.S."/>
            <person name="Xie G."/>
            <person name="Challacombe J.F."/>
            <person name="Altherr M.R."/>
            <person name="Bhotika S.S."/>
            <person name="Bruce D."/>
            <person name="Campbell C.S."/>
            <person name="Campbell M.L."/>
            <person name="Chen J."/>
            <person name="Chertkov O."/>
            <person name="Cleland C."/>
            <person name="Dimitrijevic M."/>
            <person name="Doggett N.A."/>
            <person name="Fawcett J.J."/>
            <person name="Glavina T."/>
            <person name="Goodwin L.A."/>
            <person name="Hill K.K."/>
            <person name="Hitchcock P."/>
            <person name="Jackson P.J."/>
            <person name="Keim P."/>
            <person name="Kewalramani A.R."/>
            <person name="Longmire J."/>
            <person name="Lucas S."/>
            <person name="Malfatti S."/>
            <person name="McMurry K."/>
            <person name="Meincke L.J."/>
            <person name="Misra M."/>
            <person name="Moseman B.L."/>
            <person name="Mundt M."/>
            <person name="Munk A.C."/>
            <person name="Okinaka R.T."/>
            <person name="Parson-Quintana B."/>
            <person name="Reilly L.P."/>
            <person name="Richardson P."/>
            <person name="Robinson D.L."/>
            <person name="Rubin E."/>
            <person name="Saunders E."/>
            <person name="Tapia R."/>
            <person name="Tesmer J.G."/>
            <person name="Thayer N."/>
            <person name="Thompson L.S."/>
            <person name="Tice H."/>
            <person name="Ticknor L.O."/>
            <person name="Wills P.L."/>
            <person name="Brettin T.S."/>
            <person name="Gilna P."/>
        </authorList>
    </citation>
    <scope>NUCLEOTIDE SEQUENCE [LARGE SCALE GENOMIC DNA]</scope>
    <source>
        <strain>ZK / E33L</strain>
    </source>
</reference>
<comment type="function">
    <text evidence="1">Binds 23S rRNA and is also seen to make contacts with the A and possibly P site tRNAs.</text>
</comment>
<comment type="subunit">
    <text evidence="1">Part of the 50S ribosomal subunit.</text>
</comment>
<comment type="similarity">
    <text evidence="1">Belongs to the universal ribosomal protein uL16 family.</text>
</comment>
<proteinExistence type="inferred from homology"/>
<gene>
    <name evidence="1" type="primary">rplP</name>
    <name type="ordered locus">BCE33L0111</name>
</gene>
<accession>Q63H83</accession>
<keyword id="KW-0687">Ribonucleoprotein</keyword>
<keyword id="KW-0689">Ribosomal protein</keyword>
<keyword id="KW-0694">RNA-binding</keyword>
<keyword id="KW-0699">rRNA-binding</keyword>
<keyword id="KW-0820">tRNA-binding</keyword>
<organism>
    <name type="scientific">Bacillus cereus (strain ZK / E33L)</name>
    <dbReference type="NCBI Taxonomy" id="288681"/>
    <lineage>
        <taxon>Bacteria</taxon>
        <taxon>Bacillati</taxon>
        <taxon>Bacillota</taxon>
        <taxon>Bacilli</taxon>
        <taxon>Bacillales</taxon>
        <taxon>Bacillaceae</taxon>
        <taxon>Bacillus</taxon>
        <taxon>Bacillus cereus group</taxon>
    </lineage>
</organism>
<feature type="chain" id="PRO_0000062038" description="Large ribosomal subunit protein uL16">
    <location>
        <begin position="1"/>
        <end position="144"/>
    </location>
</feature>
<sequence>MLMPKRVKYRREHRGKMRGRAKGGTEIAFGEFGLQAQAASWITNRQIEAARRAMTRYMKRGGKVWIKIFPSKPYTAKPLEVRMGSGKGAPEGWVAVVKPGKIMFEIAGVSEEVAREALRLAAHKLPVKCKFVKREENGGESNEN</sequence>
<evidence type="ECO:0000255" key="1">
    <source>
        <dbReference type="HAMAP-Rule" id="MF_01342"/>
    </source>
</evidence>
<evidence type="ECO:0000305" key="2"/>
<dbReference type="EMBL" id="CP000001">
    <property type="protein sequence ID" value="AAU20120.1"/>
    <property type="molecule type" value="Genomic_DNA"/>
</dbReference>
<dbReference type="RefSeq" id="WP_000928969.1">
    <property type="nucleotide sequence ID" value="NZ_CP009968.1"/>
</dbReference>
<dbReference type="SMR" id="Q63H83"/>
<dbReference type="GeneID" id="93010936"/>
<dbReference type="KEGG" id="bcz:BCE33L0111"/>
<dbReference type="PATRIC" id="fig|288681.22.peg.40"/>
<dbReference type="Proteomes" id="UP000002612">
    <property type="component" value="Chromosome"/>
</dbReference>
<dbReference type="GO" id="GO:0022625">
    <property type="term" value="C:cytosolic large ribosomal subunit"/>
    <property type="evidence" value="ECO:0007669"/>
    <property type="project" value="TreeGrafter"/>
</dbReference>
<dbReference type="GO" id="GO:0019843">
    <property type="term" value="F:rRNA binding"/>
    <property type="evidence" value="ECO:0007669"/>
    <property type="project" value="UniProtKB-UniRule"/>
</dbReference>
<dbReference type="GO" id="GO:0003735">
    <property type="term" value="F:structural constituent of ribosome"/>
    <property type="evidence" value="ECO:0007669"/>
    <property type="project" value="InterPro"/>
</dbReference>
<dbReference type="GO" id="GO:0000049">
    <property type="term" value="F:tRNA binding"/>
    <property type="evidence" value="ECO:0007669"/>
    <property type="project" value="UniProtKB-KW"/>
</dbReference>
<dbReference type="GO" id="GO:0006412">
    <property type="term" value="P:translation"/>
    <property type="evidence" value="ECO:0007669"/>
    <property type="project" value="UniProtKB-UniRule"/>
</dbReference>
<dbReference type="CDD" id="cd01433">
    <property type="entry name" value="Ribosomal_L16_L10e"/>
    <property type="match status" value="1"/>
</dbReference>
<dbReference type="FunFam" id="3.90.1170.10:FF:000001">
    <property type="entry name" value="50S ribosomal protein L16"/>
    <property type="match status" value="1"/>
</dbReference>
<dbReference type="Gene3D" id="3.90.1170.10">
    <property type="entry name" value="Ribosomal protein L10e/L16"/>
    <property type="match status" value="1"/>
</dbReference>
<dbReference type="HAMAP" id="MF_01342">
    <property type="entry name" value="Ribosomal_uL16"/>
    <property type="match status" value="1"/>
</dbReference>
<dbReference type="InterPro" id="IPR047873">
    <property type="entry name" value="Ribosomal_uL16"/>
</dbReference>
<dbReference type="InterPro" id="IPR000114">
    <property type="entry name" value="Ribosomal_uL16_bact-type"/>
</dbReference>
<dbReference type="InterPro" id="IPR020798">
    <property type="entry name" value="Ribosomal_uL16_CS"/>
</dbReference>
<dbReference type="InterPro" id="IPR016180">
    <property type="entry name" value="Ribosomal_uL16_dom"/>
</dbReference>
<dbReference type="InterPro" id="IPR036920">
    <property type="entry name" value="Ribosomal_uL16_sf"/>
</dbReference>
<dbReference type="NCBIfam" id="TIGR01164">
    <property type="entry name" value="rplP_bact"/>
    <property type="match status" value="1"/>
</dbReference>
<dbReference type="PANTHER" id="PTHR12220">
    <property type="entry name" value="50S/60S RIBOSOMAL PROTEIN L16"/>
    <property type="match status" value="1"/>
</dbReference>
<dbReference type="PANTHER" id="PTHR12220:SF13">
    <property type="entry name" value="LARGE RIBOSOMAL SUBUNIT PROTEIN UL16M"/>
    <property type="match status" value="1"/>
</dbReference>
<dbReference type="Pfam" id="PF00252">
    <property type="entry name" value="Ribosomal_L16"/>
    <property type="match status" value="1"/>
</dbReference>
<dbReference type="PRINTS" id="PR00060">
    <property type="entry name" value="RIBOSOMALL16"/>
</dbReference>
<dbReference type="SUPFAM" id="SSF54686">
    <property type="entry name" value="Ribosomal protein L16p/L10e"/>
    <property type="match status" value="1"/>
</dbReference>
<dbReference type="PROSITE" id="PS00586">
    <property type="entry name" value="RIBOSOMAL_L16_1"/>
    <property type="match status" value="1"/>
</dbReference>
<dbReference type="PROSITE" id="PS00701">
    <property type="entry name" value="RIBOSOMAL_L16_2"/>
    <property type="match status" value="1"/>
</dbReference>
<protein>
    <recommendedName>
        <fullName evidence="1">Large ribosomal subunit protein uL16</fullName>
    </recommendedName>
    <alternativeName>
        <fullName evidence="2">50S ribosomal protein L16</fullName>
    </alternativeName>
</protein>